<sequence>MTTLIISDLHLDPLRPVVTELFLRFLREQVSGADALYILGDLFEIWIGDDMPSEVADMVVAALRTHADAGTPLYFMPGNRDFLVGADYAARAGFRILPDPCVVDLYGEPTLLLHGDLLCTDDIAYQAFRAQTRDPEFIAQFLTQTLSARLAFAQQARLASHAHQSGLKQENDSTQFEKITDVVPADVAAMFACYGVNRMIHGHTHRPALHMLQVAECACTRVVLGDWYQQGSVLCVDADGLVLEQLLLPG</sequence>
<name>LPXH_XYLFT</name>
<keyword id="KW-0997">Cell inner membrane</keyword>
<keyword id="KW-1003">Cell membrane</keyword>
<keyword id="KW-0378">Hydrolase</keyword>
<keyword id="KW-0441">Lipid A biosynthesis</keyword>
<keyword id="KW-0444">Lipid biosynthesis</keyword>
<keyword id="KW-0443">Lipid metabolism</keyword>
<keyword id="KW-0464">Manganese</keyword>
<keyword id="KW-0472">Membrane</keyword>
<keyword id="KW-0479">Metal-binding</keyword>
<keyword id="KW-1185">Reference proteome</keyword>
<proteinExistence type="inferred from homology"/>
<dbReference type="EC" id="3.6.1.54" evidence="1"/>
<dbReference type="EMBL" id="AE009442">
    <property type="protein sequence ID" value="AAO29794.1"/>
    <property type="molecule type" value="Genomic_DNA"/>
</dbReference>
<dbReference type="RefSeq" id="WP_004090305.1">
    <property type="nucleotide sequence ID" value="NC_004556.1"/>
</dbReference>
<dbReference type="SMR" id="Q87A66"/>
<dbReference type="DNASU" id="1143307"/>
<dbReference type="GeneID" id="93905827"/>
<dbReference type="KEGG" id="xft:PD_1965"/>
<dbReference type="HOGENOM" id="CLU_074586_0_0_6"/>
<dbReference type="UniPathway" id="UPA00359">
    <property type="reaction ID" value="UER00480"/>
</dbReference>
<dbReference type="Proteomes" id="UP000002516">
    <property type="component" value="Chromosome"/>
</dbReference>
<dbReference type="GO" id="GO:0005737">
    <property type="term" value="C:cytoplasm"/>
    <property type="evidence" value="ECO:0007669"/>
    <property type="project" value="InterPro"/>
</dbReference>
<dbReference type="GO" id="GO:0019897">
    <property type="term" value="C:extrinsic component of plasma membrane"/>
    <property type="evidence" value="ECO:0007669"/>
    <property type="project" value="UniProtKB-UniRule"/>
</dbReference>
<dbReference type="GO" id="GO:0030145">
    <property type="term" value="F:manganese ion binding"/>
    <property type="evidence" value="ECO:0007669"/>
    <property type="project" value="UniProtKB-UniRule"/>
</dbReference>
<dbReference type="GO" id="GO:0008758">
    <property type="term" value="F:UDP-2,3-diacylglucosamine hydrolase activity"/>
    <property type="evidence" value="ECO:0007669"/>
    <property type="project" value="UniProtKB-UniRule"/>
</dbReference>
<dbReference type="GO" id="GO:0009245">
    <property type="term" value="P:lipid A biosynthetic process"/>
    <property type="evidence" value="ECO:0007669"/>
    <property type="project" value="UniProtKB-UniRule"/>
</dbReference>
<dbReference type="CDD" id="cd07398">
    <property type="entry name" value="MPP_YbbF-LpxH"/>
    <property type="match status" value="1"/>
</dbReference>
<dbReference type="Gene3D" id="3.60.21.10">
    <property type="match status" value="1"/>
</dbReference>
<dbReference type="HAMAP" id="MF_00575">
    <property type="entry name" value="LpxH"/>
    <property type="match status" value="1"/>
</dbReference>
<dbReference type="InterPro" id="IPR004843">
    <property type="entry name" value="Calcineurin-like_PHP_ApaH"/>
</dbReference>
<dbReference type="InterPro" id="IPR043461">
    <property type="entry name" value="LpxH-like"/>
</dbReference>
<dbReference type="InterPro" id="IPR029052">
    <property type="entry name" value="Metallo-depent_PP-like"/>
</dbReference>
<dbReference type="InterPro" id="IPR010138">
    <property type="entry name" value="UDP-diacylglucosamine_Hdrlase"/>
</dbReference>
<dbReference type="NCBIfam" id="TIGR01854">
    <property type="entry name" value="lipid_A_lpxH"/>
    <property type="match status" value="1"/>
</dbReference>
<dbReference type="NCBIfam" id="NF003743">
    <property type="entry name" value="PRK05340.1"/>
    <property type="match status" value="1"/>
</dbReference>
<dbReference type="PANTHER" id="PTHR34990:SF1">
    <property type="entry name" value="UDP-2,3-DIACYLGLUCOSAMINE HYDROLASE"/>
    <property type="match status" value="1"/>
</dbReference>
<dbReference type="PANTHER" id="PTHR34990">
    <property type="entry name" value="UDP-2,3-DIACYLGLUCOSAMINE HYDROLASE-RELATED"/>
    <property type="match status" value="1"/>
</dbReference>
<dbReference type="Pfam" id="PF00149">
    <property type="entry name" value="Metallophos"/>
    <property type="match status" value="1"/>
</dbReference>
<dbReference type="SUPFAM" id="SSF56300">
    <property type="entry name" value="Metallo-dependent phosphatases"/>
    <property type="match status" value="1"/>
</dbReference>
<comment type="function">
    <text evidence="1">Hydrolyzes the pyrophosphate bond of UDP-2,3-diacylglucosamine to yield 2,3-diacylglucosamine 1-phosphate (lipid X) and UMP by catalyzing the attack of water at the alpha-P atom. Involved in the biosynthesis of lipid A, a phosphorylated glycolipid that anchors the lipopolysaccharide to the outer membrane of the cell.</text>
</comment>
<comment type="catalytic activity">
    <reaction evidence="1">
        <text>UDP-2-N,3-O-bis[(3R)-3-hydroxytetradecanoyl]-alpha-D-glucosamine + H2O = 2-N,3-O-bis[(3R)-3-hydroxytetradecanoyl]-alpha-D-glucosaminyl 1-phosphate + UMP + 2 H(+)</text>
        <dbReference type="Rhea" id="RHEA:25213"/>
        <dbReference type="ChEBI" id="CHEBI:15377"/>
        <dbReference type="ChEBI" id="CHEBI:15378"/>
        <dbReference type="ChEBI" id="CHEBI:57865"/>
        <dbReference type="ChEBI" id="CHEBI:57957"/>
        <dbReference type="ChEBI" id="CHEBI:78847"/>
        <dbReference type="EC" id="3.6.1.54"/>
    </reaction>
</comment>
<comment type="cofactor">
    <cofactor evidence="1">
        <name>Mn(2+)</name>
        <dbReference type="ChEBI" id="CHEBI:29035"/>
    </cofactor>
    <text evidence="1">Binds 2 Mn(2+) ions per subunit in a binuclear metal center.</text>
</comment>
<comment type="pathway">
    <text evidence="1">Glycolipid biosynthesis; lipid IV(A) biosynthesis; lipid IV(A) from (3R)-3-hydroxytetradecanoyl-[acyl-carrier-protein] and UDP-N-acetyl-alpha-D-glucosamine: step 4/6.</text>
</comment>
<comment type="subcellular location">
    <subcellularLocation>
        <location evidence="1">Cell inner membrane</location>
        <topology evidence="1">Peripheral membrane protein</topology>
        <orientation evidence="1">Cytoplasmic side</orientation>
    </subcellularLocation>
</comment>
<comment type="similarity">
    <text evidence="1">Belongs to the LpxH family.</text>
</comment>
<organism>
    <name type="scientific">Xylella fastidiosa (strain Temecula1 / ATCC 700964)</name>
    <dbReference type="NCBI Taxonomy" id="183190"/>
    <lineage>
        <taxon>Bacteria</taxon>
        <taxon>Pseudomonadati</taxon>
        <taxon>Pseudomonadota</taxon>
        <taxon>Gammaproteobacteria</taxon>
        <taxon>Lysobacterales</taxon>
        <taxon>Lysobacteraceae</taxon>
        <taxon>Xylella</taxon>
    </lineage>
</organism>
<reference key="1">
    <citation type="journal article" date="2003" name="J. Bacteriol.">
        <title>Comparative analyses of the complete genome sequences of Pierce's disease and citrus variegated chlorosis strains of Xylella fastidiosa.</title>
        <authorList>
            <person name="Van Sluys M.A."/>
            <person name="de Oliveira M.C."/>
            <person name="Monteiro-Vitorello C.B."/>
            <person name="Miyaki C.Y."/>
            <person name="Furlan L.R."/>
            <person name="Camargo L.E.A."/>
            <person name="da Silva A.C.R."/>
            <person name="Moon D.H."/>
            <person name="Takita M.A."/>
            <person name="Lemos E.G.M."/>
            <person name="Machado M.A."/>
            <person name="Ferro M.I.T."/>
            <person name="da Silva F.R."/>
            <person name="Goldman M.H.S."/>
            <person name="Goldman G.H."/>
            <person name="Lemos M.V.F."/>
            <person name="El-Dorry H."/>
            <person name="Tsai S.M."/>
            <person name="Carrer H."/>
            <person name="Carraro D.M."/>
            <person name="de Oliveira R.C."/>
            <person name="Nunes L.R."/>
            <person name="Siqueira W.J."/>
            <person name="Coutinho L.L."/>
            <person name="Kimura E.T."/>
            <person name="Ferro E.S."/>
            <person name="Harakava R."/>
            <person name="Kuramae E.E."/>
            <person name="Marino C.L."/>
            <person name="Giglioti E."/>
            <person name="Abreu I.L."/>
            <person name="Alves L.M.C."/>
            <person name="do Amaral A.M."/>
            <person name="Baia G.S."/>
            <person name="Blanco S.R."/>
            <person name="Brito M.S."/>
            <person name="Cannavan F.S."/>
            <person name="Celestino A.V."/>
            <person name="da Cunha A.F."/>
            <person name="Fenille R.C."/>
            <person name="Ferro J.A."/>
            <person name="Formighieri E.F."/>
            <person name="Kishi L.T."/>
            <person name="Leoni S.G."/>
            <person name="Oliveira A.R."/>
            <person name="Rosa V.E. Jr."/>
            <person name="Sassaki F.T."/>
            <person name="Sena J.A.D."/>
            <person name="de Souza A.A."/>
            <person name="Truffi D."/>
            <person name="Tsukumo F."/>
            <person name="Yanai G.M."/>
            <person name="Zaros L.G."/>
            <person name="Civerolo E.L."/>
            <person name="Simpson A.J.G."/>
            <person name="Almeida N.F. Jr."/>
            <person name="Setubal J.C."/>
            <person name="Kitajima J.P."/>
        </authorList>
    </citation>
    <scope>NUCLEOTIDE SEQUENCE [LARGE SCALE GENOMIC DNA]</scope>
    <source>
        <strain>Temecula1 / ATCC 700964</strain>
    </source>
</reference>
<protein>
    <recommendedName>
        <fullName evidence="1">UDP-2,3-diacylglucosamine hydrolase</fullName>
        <ecNumber evidence="1">3.6.1.54</ecNumber>
    </recommendedName>
    <alternativeName>
        <fullName evidence="1">UDP-2,3-diacylglucosamine diphosphatase</fullName>
    </alternativeName>
</protein>
<evidence type="ECO:0000255" key="1">
    <source>
        <dbReference type="HAMAP-Rule" id="MF_00575"/>
    </source>
</evidence>
<feature type="chain" id="PRO_0000214133" description="UDP-2,3-diacylglucosamine hydrolase">
    <location>
        <begin position="1"/>
        <end position="250"/>
    </location>
</feature>
<feature type="binding site" evidence="1">
    <location>
        <position position="8"/>
    </location>
    <ligand>
        <name>Mn(2+)</name>
        <dbReference type="ChEBI" id="CHEBI:29035"/>
        <label>1</label>
    </ligand>
</feature>
<feature type="binding site" evidence="1">
    <location>
        <position position="10"/>
    </location>
    <ligand>
        <name>Mn(2+)</name>
        <dbReference type="ChEBI" id="CHEBI:29035"/>
        <label>1</label>
    </ligand>
</feature>
<feature type="binding site" evidence="1">
    <location>
        <position position="41"/>
    </location>
    <ligand>
        <name>Mn(2+)</name>
        <dbReference type="ChEBI" id="CHEBI:29035"/>
        <label>1</label>
    </ligand>
</feature>
<feature type="binding site" evidence="1">
    <location>
        <position position="41"/>
    </location>
    <ligand>
        <name>Mn(2+)</name>
        <dbReference type="ChEBI" id="CHEBI:29035"/>
        <label>2</label>
    </ligand>
</feature>
<feature type="binding site" evidence="1">
    <location>
        <begin position="79"/>
        <end position="80"/>
    </location>
    <ligand>
        <name>substrate</name>
    </ligand>
</feature>
<feature type="binding site" evidence="1">
    <location>
        <position position="79"/>
    </location>
    <ligand>
        <name>Mn(2+)</name>
        <dbReference type="ChEBI" id="CHEBI:29035"/>
        <label>2</label>
    </ligand>
</feature>
<feature type="binding site" evidence="1">
    <location>
        <position position="114"/>
    </location>
    <ligand>
        <name>Mn(2+)</name>
        <dbReference type="ChEBI" id="CHEBI:29035"/>
        <label>2</label>
    </ligand>
</feature>
<feature type="binding site" evidence="1">
    <location>
        <position position="122"/>
    </location>
    <ligand>
        <name>substrate</name>
    </ligand>
</feature>
<feature type="binding site" evidence="1">
    <location>
        <position position="160"/>
    </location>
    <ligand>
        <name>substrate</name>
    </ligand>
</feature>
<feature type="binding site" evidence="1">
    <location>
        <position position="172"/>
    </location>
    <ligand>
        <name>substrate</name>
    </ligand>
</feature>
<feature type="binding site" evidence="1">
    <location>
        <position position="175"/>
    </location>
    <ligand>
        <name>substrate</name>
    </ligand>
</feature>
<feature type="binding site" evidence="1">
    <location>
        <position position="203"/>
    </location>
    <ligand>
        <name>Mn(2+)</name>
        <dbReference type="ChEBI" id="CHEBI:29035"/>
        <label>2</label>
    </ligand>
</feature>
<feature type="binding site" evidence="1">
    <location>
        <position position="203"/>
    </location>
    <ligand>
        <name>substrate</name>
    </ligand>
</feature>
<feature type="binding site" evidence="1">
    <location>
        <position position="205"/>
    </location>
    <ligand>
        <name>Mn(2+)</name>
        <dbReference type="ChEBI" id="CHEBI:29035"/>
        <label>1</label>
    </ligand>
</feature>
<gene>
    <name evidence="1" type="primary">lpxH</name>
    <name type="ordered locus">PD_1965</name>
</gene>
<accession>Q87A66</accession>